<evidence type="ECO:0000255" key="1">
    <source>
        <dbReference type="HAMAP-Rule" id="MF_01274"/>
    </source>
</evidence>
<protein>
    <recommendedName>
        <fullName evidence="1">Type III pantothenate kinase</fullName>
        <ecNumber evidence="1">2.7.1.33</ecNumber>
    </recommendedName>
    <alternativeName>
        <fullName evidence="1">PanK-III</fullName>
    </alternativeName>
    <alternativeName>
        <fullName evidence="1">Pantothenic acid kinase</fullName>
    </alternativeName>
</protein>
<sequence length="251" mass="27337">MIVELDCGNSFIKWRIIDAFSRVLSSGVVESIEELVHALDEARTSHEFAHCRMVSVRSDDEVARLESVLAQRFGLRVSAVRPASCLAGVRNGYLNHERLGLDRWMAVVAAYRLSAGACLVLDLGTAVTADFVDADGEHRGGFICPGLPLLRRQLREHTRRIHYDAVAANDLTGGSFAPGRSTAEAVERGCVLMLRGFVASQLELAKEYWGDRFEIFLTGGDASLVADVLPRAKVVPDLIFTGLAIACPIPS</sequence>
<dbReference type="EC" id="2.7.1.33" evidence="1"/>
<dbReference type="EMBL" id="CP001157">
    <property type="protein sequence ID" value="ACO76859.1"/>
    <property type="molecule type" value="Genomic_DNA"/>
</dbReference>
<dbReference type="RefSeq" id="WP_012699287.1">
    <property type="nucleotide sequence ID" value="NC_012560.1"/>
</dbReference>
<dbReference type="SMR" id="C1DKJ6"/>
<dbReference type="STRING" id="322710.Avin_06060"/>
<dbReference type="EnsemblBacteria" id="ACO76859">
    <property type="protein sequence ID" value="ACO76859"/>
    <property type="gene ID" value="Avin_06060"/>
</dbReference>
<dbReference type="GeneID" id="88184017"/>
<dbReference type="KEGG" id="avn:Avin_06060"/>
<dbReference type="eggNOG" id="COG1521">
    <property type="taxonomic scope" value="Bacteria"/>
</dbReference>
<dbReference type="HOGENOM" id="CLU_066627_0_1_6"/>
<dbReference type="OrthoDB" id="9781305at2"/>
<dbReference type="UniPathway" id="UPA00241">
    <property type="reaction ID" value="UER00352"/>
</dbReference>
<dbReference type="Proteomes" id="UP000002424">
    <property type="component" value="Chromosome"/>
</dbReference>
<dbReference type="GO" id="GO:0005737">
    <property type="term" value="C:cytoplasm"/>
    <property type="evidence" value="ECO:0007669"/>
    <property type="project" value="UniProtKB-SubCell"/>
</dbReference>
<dbReference type="GO" id="GO:0005524">
    <property type="term" value="F:ATP binding"/>
    <property type="evidence" value="ECO:0007669"/>
    <property type="project" value="UniProtKB-UniRule"/>
</dbReference>
<dbReference type="GO" id="GO:0046872">
    <property type="term" value="F:metal ion binding"/>
    <property type="evidence" value="ECO:0007669"/>
    <property type="project" value="UniProtKB-KW"/>
</dbReference>
<dbReference type="GO" id="GO:0004594">
    <property type="term" value="F:pantothenate kinase activity"/>
    <property type="evidence" value="ECO:0007669"/>
    <property type="project" value="UniProtKB-UniRule"/>
</dbReference>
<dbReference type="GO" id="GO:0015937">
    <property type="term" value="P:coenzyme A biosynthetic process"/>
    <property type="evidence" value="ECO:0007669"/>
    <property type="project" value="UniProtKB-UniRule"/>
</dbReference>
<dbReference type="CDD" id="cd24015">
    <property type="entry name" value="ASKHA_NBD_PanK-III"/>
    <property type="match status" value="1"/>
</dbReference>
<dbReference type="Gene3D" id="3.30.420.40">
    <property type="match status" value="2"/>
</dbReference>
<dbReference type="HAMAP" id="MF_01274">
    <property type="entry name" value="Pantothen_kinase_3"/>
    <property type="match status" value="1"/>
</dbReference>
<dbReference type="InterPro" id="IPR043129">
    <property type="entry name" value="ATPase_NBD"/>
</dbReference>
<dbReference type="InterPro" id="IPR004619">
    <property type="entry name" value="Type_III_PanK"/>
</dbReference>
<dbReference type="NCBIfam" id="TIGR00671">
    <property type="entry name" value="baf"/>
    <property type="match status" value="1"/>
</dbReference>
<dbReference type="NCBIfam" id="NF009859">
    <property type="entry name" value="PRK13322.1-4"/>
    <property type="match status" value="1"/>
</dbReference>
<dbReference type="PANTHER" id="PTHR34265">
    <property type="entry name" value="TYPE III PANTOTHENATE KINASE"/>
    <property type="match status" value="1"/>
</dbReference>
<dbReference type="PANTHER" id="PTHR34265:SF1">
    <property type="entry name" value="TYPE III PANTOTHENATE KINASE"/>
    <property type="match status" value="1"/>
</dbReference>
<dbReference type="Pfam" id="PF03309">
    <property type="entry name" value="Pan_kinase"/>
    <property type="match status" value="1"/>
</dbReference>
<dbReference type="SUPFAM" id="SSF53067">
    <property type="entry name" value="Actin-like ATPase domain"/>
    <property type="match status" value="2"/>
</dbReference>
<comment type="function">
    <text evidence="1">Catalyzes the phosphorylation of pantothenate (Pan), the first step in CoA biosynthesis.</text>
</comment>
<comment type="catalytic activity">
    <reaction evidence="1">
        <text>(R)-pantothenate + ATP = (R)-4'-phosphopantothenate + ADP + H(+)</text>
        <dbReference type="Rhea" id="RHEA:16373"/>
        <dbReference type="ChEBI" id="CHEBI:10986"/>
        <dbReference type="ChEBI" id="CHEBI:15378"/>
        <dbReference type="ChEBI" id="CHEBI:29032"/>
        <dbReference type="ChEBI" id="CHEBI:30616"/>
        <dbReference type="ChEBI" id="CHEBI:456216"/>
        <dbReference type="EC" id="2.7.1.33"/>
    </reaction>
</comment>
<comment type="cofactor">
    <cofactor evidence="1">
        <name>NH4(+)</name>
        <dbReference type="ChEBI" id="CHEBI:28938"/>
    </cofactor>
    <cofactor evidence="1">
        <name>K(+)</name>
        <dbReference type="ChEBI" id="CHEBI:29103"/>
    </cofactor>
    <text evidence="1">A monovalent cation. Ammonium or potassium.</text>
</comment>
<comment type="pathway">
    <text evidence="1">Cofactor biosynthesis; coenzyme A biosynthesis; CoA from (R)-pantothenate: step 1/5.</text>
</comment>
<comment type="subunit">
    <text evidence="1">Homodimer.</text>
</comment>
<comment type="subcellular location">
    <subcellularLocation>
        <location evidence="1">Cytoplasm</location>
    </subcellularLocation>
</comment>
<comment type="similarity">
    <text evidence="1">Belongs to the type III pantothenate kinase family.</text>
</comment>
<feature type="chain" id="PRO_1000214181" description="Type III pantothenate kinase">
    <location>
        <begin position="1"/>
        <end position="251"/>
    </location>
</feature>
<feature type="active site" description="Proton acceptor" evidence="1">
    <location>
        <position position="102"/>
    </location>
</feature>
<feature type="binding site" evidence="1">
    <location>
        <begin position="6"/>
        <end position="13"/>
    </location>
    <ligand>
        <name>ATP</name>
        <dbReference type="ChEBI" id="CHEBI:30616"/>
    </ligand>
</feature>
<feature type="binding site" evidence="1">
    <location>
        <position position="93"/>
    </location>
    <ligand>
        <name>substrate</name>
    </ligand>
</feature>
<feature type="binding site" evidence="1">
    <location>
        <begin position="100"/>
        <end position="103"/>
    </location>
    <ligand>
        <name>substrate</name>
    </ligand>
</feature>
<feature type="binding site" evidence="1">
    <location>
        <position position="122"/>
    </location>
    <ligand>
        <name>K(+)</name>
        <dbReference type="ChEBI" id="CHEBI:29103"/>
    </ligand>
</feature>
<feature type="binding site" evidence="1">
    <location>
        <position position="125"/>
    </location>
    <ligand>
        <name>ATP</name>
        <dbReference type="ChEBI" id="CHEBI:30616"/>
    </ligand>
</feature>
<feature type="binding site" evidence="1">
    <location>
        <position position="182"/>
    </location>
    <ligand>
        <name>substrate</name>
    </ligand>
</feature>
<gene>
    <name evidence="1" type="primary">coaX</name>
    <name type="ordered locus">Avin_06060</name>
</gene>
<keyword id="KW-0067">ATP-binding</keyword>
<keyword id="KW-0173">Coenzyme A biosynthesis</keyword>
<keyword id="KW-0963">Cytoplasm</keyword>
<keyword id="KW-0418">Kinase</keyword>
<keyword id="KW-0479">Metal-binding</keyword>
<keyword id="KW-0547">Nucleotide-binding</keyword>
<keyword id="KW-0630">Potassium</keyword>
<keyword id="KW-0808">Transferase</keyword>
<accession>C1DKJ6</accession>
<name>COAX_AZOVD</name>
<reference key="1">
    <citation type="journal article" date="2009" name="J. Bacteriol.">
        <title>Genome sequence of Azotobacter vinelandii, an obligate aerobe specialized to support diverse anaerobic metabolic processes.</title>
        <authorList>
            <person name="Setubal J.C."/>
            <person name="Dos Santos P."/>
            <person name="Goldman B.S."/>
            <person name="Ertesvaag H."/>
            <person name="Espin G."/>
            <person name="Rubio L.M."/>
            <person name="Valla S."/>
            <person name="Almeida N.F."/>
            <person name="Balasubramanian D."/>
            <person name="Cromes L."/>
            <person name="Curatti L."/>
            <person name="Du Z."/>
            <person name="Godsy E."/>
            <person name="Goodner B."/>
            <person name="Hellner-Burris K."/>
            <person name="Hernandez J.A."/>
            <person name="Houmiel K."/>
            <person name="Imperial J."/>
            <person name="Kennedy C."/>
            <person name="Larson T.J."/>
            <person name="Latreille P."/>
            <person name="Ligon L.S."/>
            <person name="Lu J."/>
            <person name="Maerk M."/>
            <person name="Miller N.M."/>
            <person name="Norton S."/>
            <person name="O'Carroll I.P."/>
            <person name="Paulsen I."/>
            <person name="Raulfs E.C."/>
            <person name="Roemer R."/>
            <person name="Rosser J."/>
            <person name="Segura D."/>
            <person name="Slater S."/>
            <person name="Stricklin S.L."/>
            <person name="Studholme D.J."/>
            <person name="Sun J."/>
            <person name="Viana C.J."/>
            <person name="Wallin E."/>
            <person name="Wang B."/>
            <person name="Wheeler C."/>
            <person name="Zhu H."/>
            <person name="Dean D.R."/>
            <person name="Dixon R."/>
            <person name="Wood D."/>
        </authorList>
    </citation>
    <scope>NUCLEOTIDE SEQUENCE [LARGE SCALE GENOMIC DNA]</scope>
    <source>
        <strain>DJ / ATCC BAA-1303</strain>
    </source>
</reference>
<proteinExistence type="inferred from homology"/>
<organism>
    <name type="scientific">Azotobacter vinelandii (strain DJ / ATCC BAA-1303)</name>
    <dbReference type="NCBI Taxonomy" id="322710"/>
    <lineage>
        <taxon>Bacteria</taxon>
        <taxon>Pseudomonadati</taxon>
        <taxon>Pseudomonadota</taxon>
        <taxon>Gammaproteobacteria</taxon>
        <taxon>Pseudomonadales</taxon>
        <taxon>Pseudomonadaceae</taxon>
        <taxon>Azotobacter</taxon>
    </lineage>
</organism>